<organism>
    <name type="scientific">Syntrophotalea carbinolica (strain DSM 2380 / NBRC 103641 / GraBd1)</name>
    <name type="common">Pelobacter carbinolicus</name>
    <dbReference type="NCBI Taxonomy" id="338963"/>
    <lineage>
        <taxon>Bacteria</taxon>
        <taxon>Pseudomonadati</taxon>
        <taxon>Thermodesulfobacteriota</taxon>
        <taxon>Desulfuromonadia</taxon>
        <taxon>Desulfuromonadales</taxon>
        <taxon>Syntrophotaleaceae</taxon>
        <taxon>Syntrophotalea</taxon>
    </lineage>
</organism>
<dbReference type="EC" id="2.7.7.77" evidence="1"/>
<dbReference type="EMBL" id="CP000142">
    <property type="protein sequence ID" value="ABA89080.1"/>
    <property type="molecule type" value="Genomic_DNA"/>
</dbReference>
<dbReference type="RefSeq" id="WP_011341583.1">
    <property type="nucleotide sequence ID" value="NC_007498.2"/>
</dbReference>
<dbReference type="SMR" id="Q3A3H7"/>
<dbReference type="STRING" id="338963.Pcar_1839"/>
<dbReference type="KEGG" id="pca:Pcar_1839"/>
<dbReference type="eggNOG" id="COG0746">
    <property type="taxonomic scope" value="Bacteria"/>
</dbReference>
<dbReference type="HOGENOM" id="CLU_055597_2_1_7"/>
<dbReference type="OrthoDB" id="9788394at2"/>
<dbReference type="Proteomes" id="UP000002534">
    <property type="component" value="Chromosome"/>
</dbReference>
<dbReference type="GO" id="GO:0005737">
    <property type="term" value="C:cytoplasm"/>
    <property type="evidence" value="ECO:0007669"/>
    <property type="project" value="UniProtKB-SubCell"/>
</dbReference>
<dbReference type="GO" id="GO:0005525">
    <property type="term" value="F:GTP binding"/>
    <property type="evidence" value="ECO:0007669"/>
    <property type="project" value="UniProtKB-UniRule"/>
</dbReference>
<dbReference type="GO" id="GO:0046872">
    <property type="term" value="F:metal ion binding"/>
    <property type="evidence" value="ECO:0007669"/>
    <property type="project" value="UniProtKB-KW"/>
</dbReference>
<dbReference type="GO" id="GO:0061603">
    <property type="term" value="F:molybdenum cofactor guanylyltransferase activity"/>
    <property type="evidence" value="ECO:0007669"/>
    <property type="project" value="UniProtKB-EC"/>
</dbReference>
<dbReference type="GO" id="GO:0006777">
    <property type="term" value="P:Mo-molybdopterin cofactor biosynthetic process"/>
    <property type="evidence" value="ECO:0007669"/>
    <property type="project" value="UniProtKB-KW"/>
</dbReference>
<dbReference type="CDD" id="cd02503">
    <property type="entry name" value="MobA"/>
    <property type="match status" value="1"/>
</dbReference>
<dbReference type="Gene3D" id="3.90.550.10">
    <property type="entry name" value="Spore Coat Polysaccharide Biosynthesis Protein SpsA, Chain A"/>
    <property type="match status" value="1"/>
</dbReference>
<dbReference type="HAMAP" id="MF_00316">
    <property type="entry name" value="MobA"/>
    <property type="match status" value="1"/>
</dbReference>
<dbReference type="InterPro" id="IPR025877">
    <property type="entry name" value="MobA-like_NTP_Trfase"/>
</dbReference>
<dbReference type="InterPro" id="IPR013482">
    <property type="entry name" value="Molybde_CF_guanTrfase"/>
</dbReference>
<dbReference type="InterPro" id="IPR029044">
    <property type="entry name" value="Nucleotide-diphossugar_trans"/>
</dbReference>
<dbReference type="PANTHER" id="PTHR19136">
    <property type="entry name" value="MOLYBDENUM COFACTOR GUANYLYLTRANSFERASE"/>
    <property type="match status" value="1"/>
</dbReference>
<dbReference type="PANTHER" id="PTHR19136:SF81">
    <property type="entry name" value="MOLYBDENUM COFACTOR GUANYLYLTRANSFERASE"/>
    <property type="match status" value="1"/>
</dbReference>
<dbReference type="Pfam" id="PF12804">
    <property type="entry name" value="NTP_transf_3"/>
    <property type="match status" value="1"/>
</dbReference>
<dbReference type="SUPFAM" id="SSF53448">
    <property type="entry name" value="Nucleotide-diphospho-sugar transferases"/>
    <property type="match status" value="1"/>
</dbReference>
<evidence type="ECO:0000255" key="1">
    <source>
        <dbReference type="HAMAP-Rule" id="MF_00316"/>
    </source>
</evidence>
<protein>
    <recommendedName>
        <fullName evidence="1">Molybdenum cofactor guanylyltransferase</fullName>
        <shortName evidence="1">MoCo guanylyltransferase</shortName>
        <ecNumber evidence="1">2.7.7.77</ecNumber>
    </recommendedName>
    <alternativeName>
        <fullName evidence="1">GTP:molybdopterin guanylyltransferase</fullName>
    </alternativeName>
    <alternativeName>
        <fullName evidence="1">Mo-MPT guanylyltransferase</fullName>
    </alternativeName>
    <alternativeName>
        <fullName evidence="1">Molybdopterin guanylyltransferase</fullName>
    </alternativeName>
    <alternativeName>
        <fullName evidence="1">Molybdopterin-guanine dinucleotide synthase</fullName>
        <shortName evidence="1">MGD synthase</shortName>
    </alternativeName>
</protein>
<gene>
    <name evidence="1" type="primary">mobA</name>
    <name type="ordered locus">Pcar_1839</name>
</gene>
<feature type="chain" id="PRO_1000019129" description="Molybdenum cofactor guanylyltransferase">
    <location>
        <begin position="1"/>
        <end position="210"/>
    </location>
</feature>
<feature type="binding site" evidence="1">
    <location>
        <begin position="9"/>
        <end position="11"/>
    </location>
    <ligand>
        <name>GTP</name>
        <dbReference type="ChEBI" id="CHEBI:37565"/>
    </ligand>
</feature>
<feature type="binding site" evidence="1">
    <location>
        <position position="21"/>
    </location>
    <ligand>
        <name>GTP</name>
        <dbReference type="ChEBI" id="CHEBI:37565"/>
    </ligand>
</feature>
<feature type="binding site" evidence="1">
    <location>
        <position position="66"/>
    </location>
    <ligand>
        <name>GTP</name>
        <dbReference type="ChEBI" id="CHEBI:37565"/>
    </ligand>
</feature>
<feature type="binding site" evidence="1">
    <location>
        <position position="95"/>
    </location>
    <ligand>
        <name>GTP</name>
        <dbReference type="ChEBI" id="CHEBI:37565"/>
    </ligand>
</feature>
<feature type="binding site" evidence="1">
    <location>
        <position position="95"/>
    </location>
    <ligand>
        <name>Mg(2+)</name>
        <dbReference type="ChEBI" id="CHEBI:18420"/>
    </ligand>
</feature>
<sequence>MKFGSAVILAGGKSRRMGFDKQFLQVKNHYLLCHHGEQLAALFDKIIVVSNTPELYRETPFVVVSDEIRDKGPLGGIHIGLKTAVSDYVYFLACDMPNINLDYIRYMRQCLESSPARACITRFGDWIEPFNAFYSRDLVAAIEDYLGAGHHSLFRFLKSLATHYVSEQQARHFSPDWRMFLNLNTREDFEKWRRQGPGLGFHAPSCAASR</sequence>
<reference key="1">
    <citation type="submission" date="2005-10" db="EMBL/GenBank/DDBJ databases">
        <title>Complete sequence of Pelobacter carbinolicus DSM 2380.</title>
        <authorList>
            <person name="Copeland A."/>
            <person name="Lucas S."/>
            <person name="Lapidus A."/>
            <person name="Barry K."/>
            <person name="Detter J.C."/>
            <person name="Glavina T."/>
            <person name="Hammon N."/>
            <person name="Israni S."/>
            <person name="Pitluck S."/>
            <person name="Chertkov O."/>
            <person name="Schmutz J."/>
            <person name="Larimer F."/>
            <person name="Land M."/>
            <person name="Kyrpides N."/>
            <person name="Ivanova N."/>
            <person name="Richardson P."/>
        </authorList>
    </citation>
    <scope>NUCLEOTIDE SEQUENCE [LARGE SCALE GENOMIC DNA]</scope>
    <source>
        <strain>DSM 2380 / NBRC 103641 / GraBd1</strain>
    </source>
</reference>
<keyword id="KW-0963">Cytoplasm</keyword>
<keyword id="KW-0342">GTP-binding</keyword>
<keyword id="KW-0460">Magnesium</keyword>
<keyword id="KW-0479">Metal-binding</keyword>
<keyword id="KW-0501">Molybdenum cofactor biosynthesis</keyword>
<keyword id="KW-0547">Nucleotide-binding</keyword>
<keyword id="KW-1185">Reference proteome</keyword>
<keyword id="KW-0808">Transferase</keyword>
<accession>Q3A3H7</accession>
<name>MOBA_SYNC1</name>
<comment type="function">
    <text evidence="1">Transfers a GMP moiety from GTP to Mo-molybdopterin (Mo-MPT) cofactor (Moco or molybdenum cofactor) to form Mo-molybdopterin guanine dinucleotide (Mo-MGD) cofactor.</text>
</comment>
<comment type="catalytic activity">
    <reaction evidence="1">
        <text>Mo-molybdopterin + GTP + H(+) = Mo-molybdopterin guanine dinucleotide + diphosphate</text>
        <dbReference type="Rhea" id="RHEA:34243"/>
        <dbReference type="ChEBI" id="CHEBI:15378"/>
        <dbReference type="ChEBI" id="CHEBI:33019"/>
        <dbReference type="ChEBI" id="CHEBI:37565"/>
        <dbReference type="ChEBI" id="CHEBI:71302"/>
        <dbReference type="ChEBI" id="CHEBI:71310"/>
        <dbReference type="EC" id="2.7.7.77"/>
    </reaction>
</comment>
<comment type="cofactor">
    <cofactor evidence="1">
        <name>Mg(2+)</name>
        <dbReference type="ChEBI" id="CHEBI:18420"/>
    </cofactor>
</comment>
<comment type="subunit">
    <text evidence="1">Monomer.</text>
</comment>
<comment type="subcellular location">
    <subcellularLocation>
        <location evidence="1">Cytoplasm</location>
    </subcellularLocation>
</comment>
<comment type="domain">
    <text evidence="1">The N-terminal domain determines nucleotide recognition and specific binding, while the C-terminal domain determines the specific binding to the target protein.</text>
</comment>
<comment type="similarity">
    <text evidence="1">Belongs to the MobA family.</text>
</comment>
<proteinExistence type="inferred from homology"/>